<gene>
    <name evidence="1" type="primary">rps11</name>
    <name type="ordered locus">NP_2832A</name>
</gene>
<protein>
    <recommendedName>
        <fullName evidence="1">Small ribosomal subunit protein uS11</fullName>
    </recommendedName>
    <alternativeName>
        <fullName evidence="2">30S ribosomal protein S11</fullName>
    </alternativeName>
</protein>
<sequence>MADDTTWGIANVYASFNNTIITVTDMTGAETIVKSSGGTVVKQNRDEASPYAAMQMAEVVAEDVKDAGIDGVHVRVRGPGGNQQQNPGPGAQATIRALARAGLEIGRIEDVTPIPHDGTRGPKNAGF</sequence>
<feature type="chain" id="PRO_0000230445" description="Small ribosomal subunit protein uS11">
    <location>
        <begin position="1"/>
        <end position="127"/>
    </location>
</feature>
<dbReference type="EMBL" id="CR936257">
    <property type="protein sequence ID" value="CAI49507.1"/>
    <property type="molecule type" value="Genomic_DNA"/>
</dbReference>
<dbReference type="RefSeq" id="WP_011323132.1">
    <property type="nucleotide sequence ID" value="NC_007426.1"/>
</dbReference>
<dbReference type="SMR" id="Q3IQT7"/>
<dbReference type="STRING" id="348780.NP_2832A"/>
<dbReference type="EnsemblBacteria" id="CAI49507">
    <property type="protein sequence ID" value="CAI49507"/>
    <property type="gene ID" value="NP_2832A"/>
</dbReference>
<dbReference type="GeneID" id="3703166"/>
<dbReference type="KEGG" id="nph:NP_2832A"/>
<dbReference type="eggNOG" id="arCOG04240">
    <property type="taxonomic scope" value="Archaea"/>
</dbReference>
<dbReference type="HOGENOM" id="CLU_072439_6_1_2"/>
<dbReference type="OrthoDB" id="12054at2157"/>
<dbReference type="Proteomes" id="UP000002698">
    <property type="component" value="Chromosome"/>
</dbReference>
<dbReference type="GO" id="GO:1990904">
    <property type="term" value="C:ribonucleoprotein complex"/>
    <property type="evidence" value="ECO:0007669"/>
    <property type="project" value="UniProtKB-KW"/>
</dbReference>
<dbReference type="GO" id="GO:0005840">
    <property type="term" value="C:ribosome"/>
    <property type="evidence" value="ECO:0007669"/>
    <property type="project" value="UniProtKB-KW"/>
</dbReference>
<dbReference type="GO" id="GO:0019843">
    <property type="term" value="F:rRNA binding"/>
    <property type="evidence" value="ECO:0007669"/>
    <property type="project" value="UniProtKB-UniRule"/>
</dbReference>
<dbReference type="GO" id="GO:0003735">
    <property type="term" value="F:structural constituent of ribosome"/>
    <property type="evidence" value="ECO:0007669"/>
    <property type="project" value="InterPro"/>
</dbReference>
<dbReference type="GO" id="GO:0006412">
    <property type="term" value="P:translation"/>
    <property type="evidence" value="ECO:0007669"/>
    <property type="project" value="UniProtKB-UniRule"/>
</dbReference>
<dbReference type="FunFam" id="3.30.420.80:FF:000018">
    <property type="entry name" value="40S ribosomal protein S14"/>
    <property type="match status" value="1"/>
</dbReference>
<dbReference type="Gene3D" id="3.30.420.80">
    <property type="entry name" value="Ribosomal protein S11"/>
    <property type="match status" value="1"/>
</dbReference>
<dbReference type="HAMAP" id="MF_01310">
    <property type="entry name" value="Ribosomal_uS11"/>
    <property type="match status" value="1"/>
</dbReference>
<dbReference type="InterPro" id="IPR001971">
    <property type="entry name" value="Ribosomal_uS11"/>
</dbReference>
<dbReference type="InterPro" id="IPR019961">
    <property type="entry name" value="Ribosomal_uS11_archaeal"/>
</dbReference>
<dbReference type="InterPro" id="IPR018102">
    <property type="entry name" value="Ribosomal_uS11_CS"/>
</dbReference>
<dbReference type="InterPro" id="IPR036967">
    <property type="entry name" value="Ribosomal_uS11_sf"/>
</dbReference>
<dbReference type="NCBIfam" id="TIGR03628">
    <property type="entry name" value="arch_S11P"/>
    <property type="match status" value="1"/>
</dbReference>
<dbReference type="NCBIfam" id="NF007176">
    <property type="entry name" value="PRK09607.1"/>
    <property type="match status" value="1"/>
</dbReference>
<dbReference type="PANTHER" id="PTHR11759">
    <property type="entry name" value="40S RIBOSOMAL PROTEIN S14/30S RIBOSOMAL PROTEIN S11"/>
    <property type="match status" value="1"/>
</dbReference>
<dbReference type="Pfam" id="PF00411">
    <property type="entry name" value="Ribosomal_S11"/>
    <property type="match status" value="1"/>
</dbReference>
<dbReference type="PIRSF" id="PIRSF002131">
    <property type="entry name" value="Ribosomal_S11"/>
    <property type="match status" value="1"/>
</dbReference>
<dbReference type="SUPFAM" id="SSF53137">
    <property type="entry name" value="Translational machinery components"/>
    <property type="match status" value="1"/>
</dbReference>
<dbReference type="PROSITE" id="PS00054">
    <property type="entry name" value="RIBOSOMAL_S11"/>
    <property type="match status" value="1"/>
</dbReference>
<reference key="1">
    <citation type="journal article" date="2005" name="Genome Res.">
        <title>Living with two extremes: conclusions from the genome sequence of Natronomonas pharaonis.</title>
        <authorList>
            <person name="Falb M."/>
            <person name="Pfeiffer F."/>
            <person name="Palm P."/>
            <person name="Rodewald K."/>
            <person name="Hickmann V."/>
            <person name="Tittor J."/>
            <person name="Oesterhelt D."/>
        </authorList>
    </citation>
    <scope>NUCLEOTIDE SEQUENCE [LARGE SCALE GENOMIC DNA]</scope>
    <source>
        <strain>ATCC 35678 / DSM 2160 / CIP 103997 / JCM 8858 / NBRC 14720 / NCIMB 2260 / Gabara</strain>
    </source>
</reference>
<evidence type="ECO:0000255" key="1">
    <source>
        <dbReference type="HAMAP-Rule" id="MF_01310"/>
    </source>
</evidence>
<evidence type="ECO:0000305" key="2"/>
<organism>
    <name type="scientific">Natronomonas pharaonis (strain ATCC 35678 / DSM 2160 / CIP 103997 / JCM 8858 / NBRC 14720 / NCIMB 2260 / Gabara)</name>
    <name type="common">Halobacterium pharaonis</name>
    <dbReference type="NCBI Taxonomy" id="348780"/>
    <lineage>
        <taxon>Archaea</taxon>
        <taxon>Methanobacteriati</taxon>
        <taxon>Methanobacteriota</taxon>
        <taxon>Stenosarchaea group</taxon>
        <taxon>Halobacteria</taxon>
        <taxon>Halobacteriales</taxon>
        <taxon>Haloarculaceae</taxon>
        <taxon>Natronomonas</taxon>
    </lineage>
</organism>
<name>RS11_NATPD</name>
<keyword id="KW-1185">Reference proteome</keyword>
<keyword id="KW-0687">Ribonucleoprotein</keyword>
<keyword id="KW-0689">Ribosomal protein</keyword>
<keyword id="KW-0694">RNA-binding</keyword>
<keyword id="KW-0699">rRNA-binding</keyword>
<comment type="function">
    <text evidence="1">Located on the platform of the 30S subunit.</text>
</comment>
<comment type="subunit">
    <text evidence="1">Part of the 30S ribosomal subunit.</text>
</comment>
<comment type="similarity">
    <text evidence="1">Belongs to the universal ribosomal protein uS11 family.</text>
</comment>
<proteinExistence type="inferred from homology"/>
<accession>Q3IQT7</accession>